<gene>
    <name evidence="1" type="primary">recO</name>
    <name type="ordered locus">Mfl267</name>
</gene>
<organism>
    <name type="scientific">Mesoplasma florum (strain ATCC 33453 / NBRC 100688 / NCTC 11704 / L1)</name>
    <name type="common">Acholeplasma florum</name>
    <dbReference type="NCBI Taxonomy" id="265311"/>
    <lineage>
        <taxon>Bacteria</taxon>
        <taxon>Bacillati</taxon>
        <taxon>Mycoplasmatota</taxon>
        <taxon>Mollicutes</taxon>
        <taxon>Entomoplasmatales</taxon>
        <taxon>Entomoplasmataceae</taxon>
        <taxon>Mesoplasma</taxon>
    </lineage>
</organism>
<name>RECO_MESFL</name>
<feature type="chain" id="PRO_1000193394" description="DNA repair protein RecO">
    <location>
        <begin position="1"/>
        <end position="267"/>
    </location>
</feature>
<keyword id="KW-0227">DNA damage</keyword>
<keyword id="KW-0233">DNA recombination</keyword>
<keyword id="KW-0234">DNA repair</keyword>
<keyword id="KW-1185">Reference proteome</keyword>
<dbReference type="EMBL" id="AE017263">
    <property type="protein sequence ID" value="AAT75624.1"/>
    <property type="molecule type" value="Genomic_DNA"/>
</dbReference>
<dbReference type="RefSeq" id="WP_011183164.1">
    <property type="nucleotide sequence ID" value="NC_006055.1"/>
</dbReference>
<dbReference type="RefSeq" id="YP_053508.1">
    <property type="nucleotide sequence ID" value="NC_006055.1"/>
</dbReference>
<dbReference type="SMR" id="Q6F1J9"/>
<dbReference type="STRING" id="265311.Mfl267"/>
<dbReference type="PaxDb" id="265311-Mfl267"/>
<dbReference type="EnsemblBacteria" id="AAT75624">
    <property type="protein sequence ID" value="AAT75624"/>
    <property type="gene ID" value="Mfl267"/>
</dbReference>
<dbReference type="GeneID" id="2897822"/>
<dbReference type="KEGG" id="mfl:Mfl267"/>
<dbReference type="PATRIC" id="fig|265311.5.peg.267"/>
<dbReference type="eggNOG" id="COG1381">
    <property type="taxonomic scope" value="Bacteria"/>
</dbReference>
<dbReference type="HOGENOM" id="CLU_066632_5_0_14"/>
<dbReference type="OrthoDB" id="404042at2"/>
<dbReference type="Proteomes" id="UP000006647">
    <property type="component" value="Chromosome"/>
</dbReference>
<dbReference type="GO" id="GO:0043590">
    <property type="term" value="C:bacterial nucleoid"/>
    <property type="evidence" value="ECO:0007669"/>
    <property type="project" value="TreeGrafter"/>
</dbReference>
<dbReference type="GO" id="GO:0006310">
    <property type="term" value="P:DNA recombination"/>
    <property type="evidence" value="ECO:0007669"/>
    <property type="project" value="UniProtKB-UniRule"/>
</dbReference>
<dbReference type="GO" id="GO:0006302">
    <property type="term" value="P:double-strand break repair"/>
    <property type="evidence" value="ECO:0007669"/>
    <property type="project" value="TreeGrafter"/>
</dbReference>
<dbReference type="Gene3D" id="2.40.50.140">
    <property type="entry name" value="Nucleic acid-binding proteins"/>
    <property type="match status" value="1"/>
</dbReference>
<dbReference type="HAMAP" id="MF_00201">
    <property type="entry name" value="RecO"/>
    <property type="match status" value="1"/>
</dbReference>
<dbReference type="InterPro" id="IPR037278">
    <property type="entry name" value="ARFGAP/RecO"/>
</dbReference>
<dbReference type="InterPro" id="IPR022572">
    <property type="entry name" value="DNA_rep/recomb_RecO_N"/>
</dbReference>
<dbReference type="InterPro" id="IPR012340">
    <property type="entry name" value="NA-bd_OB-fold"/>
</dbReference>
<dbReference type="InterPro" id="IPR003717">
    <property type="entry name" value="RecO"/>
</dbReference>
<dbReference type="NCBIfam" id="TIGR00613">
    <property type="entry name" value="reco"/>
    <property type="match status" value="1"/>
</dbReference>
<dbReference type="PANTHER" id="PTHR33991">
    <property type="entry name" value="DNA REPAIR PROTEIN RECO"/>
    <property type="match status" value="1"/>
</dbReference>
<dbReference type="PANTHER" id="PTHR33991:SF1">
    <property type="entry name" value="DNA REPAIR PROTEIN RECO"/>
    <property type="match status" value="1"/>
</dbReference>
<dbReference type="Pfam" id="PF02565">
    <property type="entry name" value="RecO_C"/>
    <property type="match status" value="1"/>
</dbReference>
<dbReference type="Pfam" id="PF11967">
    <property type="entry name" value="RecO_N"/>
    <property type="match status" value="1"/>
</dbReference>
<dbReference type="SUPFAM" id="SSF57863">
    <property type="entry name" value="ArfGap/RecO-like zinc finger"/>
    <property type="match status" value="1"/>
</dbReference>
<dbReference type="SUPFAM" id="SSF50249">
    <property type="entry name" value="Nucleic acid-binding proteins"/>
    <property type="match status" value="1"/>
</dbReference>
<accession>Q6F1J9</accession>
<comment type="function">
    <text evidence="1">Involved in DNA repair and RecF pathway recombination.</text>
</comment>
<comment type="similarity">
    <text evidence="1">Belongs to the RecO family.</text>
</comment>
<evidence type="ECO:0000255" key="1">
    <source>
        <dbReference type="HAMAP-Rule" id="MF_00201"/>
    </source>
</evidence>
<protein>
    <recommendedName>
        <fullName evidence="1">DNA repair protein RecO</fullName>
    </recommendedName>
    <alternativeName>
        <fullName evidence="1">Recombination protein O</fullName>
    </alternativeName>
</protein>
<sequence length="267" mass="31766">MSEVKIRGIVLDSLNYEENDKIITVYSDEFGKLSFIALGANKASSKNNYSLNVFSESDFEIFKSRKTQSISKLKTGILVRNNFKIAKSYNNYLFASIISSVILQEELFYNKDFKLFDMLREAIRNINDEVNPFSNMVWFLFYSLKNFGGYWELNKCYRCNKASKIYRKFDLQHYGLVCPNCINENEEEHDYEFIKYLQRMDNNTFFTIQKFPINVSFEIIISKLLFSYYLNEIGIYSYPMNEILKKEVYKDDTFWEYTHKVLTKNSI</sequence>
<proteinExistence type="inferred from homology"/>
<reference key="1">
    <citation type="submission" date="2004-06" db="EMBL/GenBank/DDBJ databases">
        <authorList>
            <person name="Birren B.W."/>
            <person name="Stange-Thomann N."/>
            <person name="Hafez N."/>
            <person name="DeCaprio D."/>
            <person name="Fisher S."/>
            <person name="Butler J."/>
            <person name="Elkins T."/>
            <person name="Kodira C.D."/>
            <person name="Major J."/>
            <person name="Wang S."/>
            <person name="Nicol R."/>
            <person name="Nusbaum C."/>
        </authorList>
    </citation>
    <scope>NUCLEOTIDE SEQUENCE [LARGE SCALE GENOMIC DNA]</scope>
    <source>
        <strain>ATCC 33453 / NBRC 100688 / NCTC 11704 / L1</strain>
    </source>
</reference>